<dbReference type="EC" id="2.3.1.-" evidence="4"/>
<dbReference type="EMBL" id="CP000139">
    <property type="protein sequence ID" value="ABR39094.1"/>
    <property type="molecule type" value="Genomic_DNA"/>
</dbReference>
<dbReference type="STRING" id="435590.BVU_1406"/>
<dbReference type="PaxDb" id="435590-BVU_1406"/>
<dbReference type="KEGG" id="bvu:BVU_1406"/>
<dbReference type="eggNOG" id="COG0204">
    <property type="taxonomic scope" value="Bacteria"/>
</dbReference>
<dbReference type="HOGENOM" id="CLU_067500_1_0_10"/>
<dbReference type="Proteomes" id="UP000002861">
    <property type="component" value="Chromosome"/>
</dbReference>
<dbReference type="GO" id="GO:0016746">
    <property type="term" value="F:acyltransferase activity"/>
    <property type="evidence" value="ECO:0007669"/>
    <property type="project" value="UniProtKB-KW"/>
</dbReference>
<dbReference type="GO" id="GO:0006629">
    <property type="term" value="P:lipid metabolic process"/>
    <property type="evidence" value="ECO:0007669"/>
    <property type="project" value="UniProtKB-KW"/>
</dbReference>
<dbReference type="InterPro" id="IPR045746">
    <property type="entry name" value="ACT14924-like_Acyltransf_dom"/>
</dbReference>
<dbReference type="Pfam" id="PF19576">
    <property type="entry name" value="Acyltransf_2"/>
    <property type="match status" value="1"/>
</dbReference>
<dbReference type="SUPFAM" id="SSF69593">
    <property type="entry name" value="Glycerol-3-phosphate (1)-acyltransferase"/>
    <property type="match status" value="1"/>
</dbReference>
<accession>A6L080</accession>
<comment type="function">
    <text evidence="1">Is involved in the production of glycine lipids (GL), which are phosphorus-free membrane lipids. Catalyzes the second step of GL biosynthesis, i.e. the O-acylation of the hydroxyl group of lyso-glycine lipids, resulting in the production of the mature diacylated glycine lipids.</text>
</comment>
<comment type="catalytic activity">
    <reaction evidence="4">
        <text>a lyso-glycine lipid + a fatty acyl-[ACP] = a glycine lipid + holo-[ACP]</text>
        <dbReference type="Rhea" id="RHEA:80951"/>
        <dbReference type="Rhea" id="RHEA-COMP:9685"/>
        <dbReference type="Rhea" id="RHEA-COMP:14125"/>
        <dbReference type="ChEBI" id="CHEBI:64479"/>
        <dbReference type="ChEBI" id="CHEBI:138651"/>
        <dbReference type="ChEBI" id="CHEBI:231742"/>
        <dbReference type="ChEBI" id="CHEBI:231744"/>
    </reaction>
    <physiologicalReaction direction="left-to-right" evidence="1">
        <dbReference type="Rhea" id="RHEA:80952"/>
    </physiologicalReaction>
</comment>
<comment type="catalytic activity">
    <reaction evidence="4">
        <text>N-[(3R)-3-hydroxyhexadecanoyl]-glycine + hexadecanoyl-[ACP] = N-[(3R)-3-(hexadecanoyloxy)hexadecanoyl]-glycine + holo-[ACP]</text>
        <dbReference type="Rhea" id="RHEA:80959"/>
        <dbReference type="Rhea" id="RHEA-COMP:9652"/>
        <dbReference type="Rhea" id="RHEA-COMP:9685"/>
        <dbReference type="ChEBI" id="CHEBI:64479"/>
        <dbReference type="ChEBI" id="CHEBI:78483"/>
        <dbReference type="ChEBI" id="CHEBI:231743"/>
        <dbReference type="ChEBI" id="CHEBI:231745"/>
    </reaction>
    <physiologicalReaction direction="left-to-right" evidence="1">
        <dbReference type="Rhea" id="RHEA:80960"/>
    </physiologicalReaction>
</comment>
<comment type="pathway">
    <text evidence="1">Lipid metabolism.</text>
</comment>
<comment type="similarity">
    <text evidence="3">Belongs to the O-acyltransferase GlsA family.</text>
</comment>
<gene>
    <name evidence="2" type="primary">glsA</name>
    <name evidence="2" type="synonym">choB</name>
    <name evidence="5" type="ordered locus">BVU_1406</name>
</gene>
<protein>
    <recommendedName>
        <fullName evidence="2">Lyso-glycine lipid O-acyltransferase</fullName>
        <shortName evidence="2">Lyso-GL O-acyltransferase</shortName>
        <ecNumber evidence="4">2.3.1.-</ecNumber>
    </recommendedName>
</protein>
<sequence>MEKNVCKMTDDSIFLIDIEKILKTKAGKKYKYIPRFVVSYLKHIVHQDELNVFLKDSKNKVGVDFLEACMEFLDAKVEIKGLENLPENGKCTFVSNHPLGGQDGVALGYILGKHYNGNVRYLVNDLLMNLHGLAPLCIPINKTGSQSRDFPKMVEAGFASDNHIIMFPAGLCSRRQGGEIKDLEWKKTFVTKSIETHRDVVPLHFEGRNSDFFYNLANICKALGIKFNIAMLYLADEMLKNRHKTFTLTIGKPIPWQTFDKTKTPAQWAQFVKDVVYKL</sequence>
<organism>
    <name type="scientific">Phocaeicola vulgatus (strain ATCC 8482 / DSM 1447 / JCM 5826 / CCUG 4940 / NBRC 14291 / NCTC 11154)</name>
    <name type="common">Bacteroides vulgatus</name>
    <dbReference type="NCBI Taxonomy" id="435590"/>
    <lineage>
        <taxon>Bacteria</taxon>
        <taxon>Pseudomonadati</taxon>
        <taxon>Bacteroidota</taxon>
        <taxon>Bacteroidia</taxon>
        <taxon>Bacteroidales</taxon>
        <taxon>Bacteroidaceae</taxon>
        <taxon>Phocaeicola</taxon>
    </lineage>
</organism>
<evidence type="ECO:0000269" key="1">
    <source>
    </source>
</evidence>
<evidence type="ECO:0000303" key="2">
    <source>
    </source>
</evidence>
<evidence type="ECO:0000305" key="3"/>
<evidence type="ECO:0000305" key="4">
    <source>
    </source>
</evidence>
<evidence type="ECO:0000312" key="5">
    <source>
        <dbReference type="EMBL" id="ABR39094.1"/>
    </source>
</evidence>
<reference key="1">
    <citation type="journal article" date="2007" name="PLoS Biol.">
        <title>Evolution of symbiotic bacteria in the distal human intestine.</title>
        <authorList>
            <person name="Xu J."/>
            <person name="Mahowald M.A."/>
            <person name="Ley R.E."/>
            <person name="Lozupone C.A."/>
            <person name="Hamady M."/>
            <person name="Martens E.C."/>
            <person name="Henrissat B."/>
            <person name="Coutinho P.M."/>
            <person name="Minx P."/>
            <person name="Latreille P."/>
            <person name="Cordum H."/>
            <person name="Van Brunt A."/>
            <person name="Kim K."/>
            <person name="Fulton R.S."/>
            <person name="Fulton L.A."/>
            <person name="Clifton S.W."/>
            <person name="Wilson R.K."/>
            <person name="Knight R.D."/>
            <person name="Gordon J.I."/>
        </authorList>
    </citation>
    <scope>NUCLEOTIDE SEQUENCE [LARGE SCALE GENOMIC DNA]</scope>
    <source>
        <strain>ATCC 8482 / DSM 1447 / JCM 5826 / CCUG 4940 / NBRC 14291 / NCTC 11154</strain>
    </source>
</reference>
<reference key="2">
    <citation type="journal article" date="2019" name="Appl. Environ. Microbiol.">
        <title>The Glycine Lipids of Bacteroides thetaiotaomicron Are Important for Fitness during Growth In Vivo and In Vitro.</title>
        <authorList>
            <person name="Lynch A."/>
            <person name="Tammireddy S.R."/>
            <person name="Doherty M.K."/>
            <person name="Whitfield P.D."/>
            <person name="Clarke D.J."/>
        </authorList>
    </citation>
    <scope>FUNCTION</scope>
    <scope>PATHWAY</scope>
    <source>
        <strain>ATCC 8482 / DSM 1447 / JCM 5826 / CCUG 4940 / NBRC 14291 / NCTC 11154</strain>
    </source>
</reference>
<feature type="chain" id="PRO_0000461303" description="Lyso-glycine lipid O-acyltransferase">
    <location>
        <begin position="1"/>
        <end position="279"/>
    </location>
</feature>
<proteinExistence type="inferred from homology"/>
<name>GLSAA_PHOV8</name>
<keyword id="KW-0012">Acyltransferase</keyword>
<keyword id="KW-0444">Lipid biosynthesis</keyword>
<keyword id="KW-0443">Lipid metabolism</keyword>
<keyword id="KW-0808">Transferase</keyword>